<proteinExistence type="inferred from homology"/>
<feature type="chain" id="PRO_1000075302" description="Acetylglutamate kinase">
    <location>
        <begin position="1"/>
        <end position="301"/>
    </location>
</feature>
<feature type="binding site" evidence="1">
    <location>
        <begin position="72"/>
        <end position="73"/>
    </location>
    <ligand>
        <name>substrate</name>
    </ligand>
</feature>
<feature type="binding site" evidence="1">
    <location>
        <position position="94"/>
    </location>
    <ligand>
        <name>substrate</name>
    </ligand>
</feature>
<feature type="binding site" evidence="1">
    <location>
        <position position="199"/>
    </location>
    <ligand>
        <name>substrate</name>
    </ligand>
</feature>
<feature type="site" description="Transition state stabilizer" evidence="1">
    <location>
        <position position="37"/>
    </location>
</feature>
<feature type="site" description="Transition state stabilizer" evidence="1">
    <location>
        <position position="259"/>
    </location>
</feature>
<keyword id="KW-0028">Amino-acid biosynthesis</keyword>
<keyword id="KW-0055">Arginine biosynthesis</keyword>
<keyword id="KW-0067">ATP-binding</keyword>
<keyword id="KW-0963">Cytoplasm</keyword>
<keyword id="KW-0418">Kinase</keyword>
<keyword id="KW-0547">Nucleotide-binding</keyword>
<keyword id="KW-0808">Transferase</keyword>
<comment type="function">
    <text evidence="1">Catalyzes the ATP-dependent phosphorylation of N-acetyl-L-glutamate.</text>
</comment>
<comment type="catalytic activity">
    <reaction evidence="1">
        <text>N-acetyl-L-glutamate + ATP = N-acetyl-L-glutamyl 5-phosphate + ADP</text>
        <dbReference type="Rhea" id="RHEA:14629"/>
        <dbReference type="ChEBI" id="CHEBI:30616"/>
        <dbReference type="ChEBI" id="CHEBI:44337"/>
        <dbReference type="ChEBI" id="CHEBI:57936"/>
        <dbReference type="ChEBI" id="CHEBI:456216"/>
        <dbReference type="EC" id="2.7.2.8"/>
    </reaction>
</comment>
<comment type="pathway">
    <text evidence="1">Amino-acid biosynthesis; L-arginine biosynthesis; N(2)-acetyl-L-ornithine from L-glutamate: step 2/4.</text>
</comment>
<comment type="subcellular location">
    <subcellularLocation>
        <location evidence="1">Cytoplasm</location>
    </subcellularLocation>
</comment>
<comment type="similarity">
    <text evidence="1">Belongs to the acetylglutamate kinase family. ArgB subfamily.</text>
</comment>
<name>ARGB_BART1</name>
<reference key="1">
    <citation type="journal article" date="2007" name="Nat. Genet.">
        <title>Genomic analysis of Bartonella identifies type IV secretion systems as host adaptability factors.</title>
        <authorList>
            <person name="Saenz H.L."/>
            <person name="Engel P."/>
            <person name="Stoeckli M.C."/>
            <person name="Lanz C."/>
            <person name="Raddatz G."/>
            <person name="Vayssier-Taussat M."/>
            <person name="Birtles R."/>
            <person name="Schuster S.C."/>
            <person name="Dehio C."/>
        </authorList>
    </citation>
    <scope>NUCLEOTIDE SEQUENCE [LARGE SCALE GENOMIC DNA]</scope>
    <source>
        <strain>CIP 105476 / IBS 506</strain>
    </source>
</reference>
<protein>
    <recommendedName>
        <fullName evidence="1">Acetylglutamate kinase</fullName>
        <ecNumber evidence="1">2.7.2.8</ecNumber>
    </recommendedName>
    <alternativeName>
        <fullName evidence="1">N-acetyl-L-glutamate 5-phosphotransferase</fullName>
    </alternativeName>
    <alternativeName>
        <fullName evidence="1">NAG kinase</fullName>
        <shortName evidence="1">NAGK</shortName>
    </alternativeName>
</protein>
<gene>
    <name evidence="1" type="primary">argB</name>
    <name type="ordered locus">BT_0069</name>
</gene>
<accession>A9ILI4</accession>
<evidence type="ECO:0000255" key="1">
    <source>
        <dbReference type="HAMAP-Rule" id="MF_00082"/>
    </source>
</evidence>
<dbReference type="EC" id="2.7.2.8" evidence="1"/>
<dbReference type="EMBL" id="AM260525">
    <property type="protein sequence ID" value="CAK00568.1"/>
    <property type="molecule type" value="Genomic_DNA"/>
</dbReference>
<dbReference type="RefSeq" id="WP_012230379.1">
    <property type="nucleotide sequence ID" value="NC_010161.1"/>
</dbReference>
<dbReference type="SMR" id="A9ILI4"/>
<dbReference type="KEGG" id="btr:BT_0069"/>
<dbReference type="eggNOG" id="COG0548">
    <property type="taxonomic scope" value="Bacteria"/>
</dbReference>
<dbReference type="HOGENOM" id="CLU_053680_0_0_5"/>
<dbReference type="UniPathway" id="UPA00068">
    <property type="reaction ID" value="UER00107"/>
</dbReference>
<dbReference type="Proteomes" id="UP000001592">
    <property type="component" value="Chromosome"/>
</dbReference>
<dbReference type="GO" id="GO:0005737">
    <property type="term" value="C:cytoplasm"/>
    <property type="evidence" value="ECO:0007669"/>
    <property type="project" value="UniProtKB-SubCell"/>
</dbReference>
<dbReference type="GO" id="GO:0003991">
    <property type="term" value="F:acetylglutamate kinase activity"/>
    <property type="evidence" value="ECO:0007669"/>
    <property type="project" value="UniProtKB-UniRule"/>
</dbReference>
<dbReference type="GO" id="GO:0005524">
    <property type="term" value="F:ATP binding"/>
    <property type="evidence" value="ECO:0007669"/>
    <property type="project" value="UniProtKB-UniRule"/>
</dbReference>
<dbReference type="GO" id="GO:0042450">
    <property type="term" value="P:arginine biosynthetic process via ornithine"/>
    <property type="evidence" value="ECO:0007669"/>
    <property type="project" value="UniProtKB-UniRule"/>
</dbReference>
<dbReference type="GO" id="GO:0006526">
    <property type="term" value="P:L-arginine biosynthetic process"/>
    <property type="evidence" value="ECO:0007669"/>
    <property type="project" value="UniProtKB-UniPathway"/>
</dbReference>
<dbReference type="CDD" id="cd04250">
    <property type="entry name" value="AAK_NAGK-C"/>
    <property type="match status" value="1"/>
</dbReference>
<dbReference type="FunFam" id="3.40.1160.10:FF:000004">
    <property type="entry name" value="Acetylglutamate kinase"/>
    <property type="match status" value="1"/>
</dbReference>
<dbReference type="Gene3D" id="3.40.1160.10">
    <property type="entry name" value="Acetylglutamate kinase-like"/>
    <property type="match status" value="1"/>
</dbReference>
<dbReference type="HAMAP" id="MF_00082">
    <property type="entry name" value="ArgB"/>
    <property type="match status" value="1"/>
</dbReference>
<dbReference type="InterPro" id="IPR036393">
    <property type="entry name" value="AceGlu_kinase-like_sf"/>
</dbReference>
<dbReference type="InterPro" id="IPR004662">
    <property type="entry name" value="AcgluKinase_fam"/>
</dbReference>
<dbReference type="InterPro" id="IPR037528">
    <property type="entry name" value="ArgB"/>
</dbReference>
<dbReference type="InterPro" id="IPR001048">
    <property type="entry name" value="Asp/Glu/Uridylate_kinase"/>
</dbReference>
<dbReference type="InterPro" id="IPR001057">
    <property type="entry name" value="Glu/AcGlu_kinase"/>
</dbReference>
<dbReference type="InterPro" id="IPR041727">
    <property type="entry name" value="NAGK-C"/>
</dbReference>
<dbReference type="NCBIfam" id="TIGR00761">
    <property type="entry name" value="argB"/>
    <property type="match status" value="1"/>
</dbReference>
<dbReference type="PANTHER" id="PTHR23342">
    <property type="entry name" value="N-ACETYLGLUTAMATE SYNTHASE"/>
    <property type="match status" value="1"/>
</dbReference>
<dbReference type="PANTHER" id="PTHR23342:SF0">
    <property type="entry name" value="N-ACETYLGLUTAMATE SYNTHASE, MITOCHONDRIAL"/>
    <property type="match status" value="1"/>
</dbReference>
<dbReference type="Pfam" id="PF00696">
    <property type="entry name" value="AA_kinase"/>
    <property type="match status" value="1"/>
</dbReference>
<dbReference type="PIRSF" id="PIRSF000728">
    <property type="entry name" value="NAGK"/>
    <property type="match status" value="1"/>
</dbReference>
<dbReference type="PRINTS" id="PR00474">
    <property type="entry name" value="GLU5KINASE"/>
</dbReference>
<dbReference type="SUPFAM" id="SSF53633">
    <property type="entry name" value="Carbamate kinase-like"/>
    <property type="match status" value="1"/>
</dbReference>
<sequence length="301" mass="32147">MDDAKNSAVDVLEKQAAFLSSALPYMQKYENETVVVKYGGHAMGDPALGRAFARDIALLKQSGINPVVVHGGGPQIAEILMKMGIESRFENGLRVTDERIVEVVEMVLAGSINKEIVALINAEGEWAIGLCGKDGNMVFAEKAYRTVIDPDSHIERVLDLGFVGEPIEVDRTLLDLLACSEMIPVLAPVAPGRDGKTYNINADIFAGAIAGALEAKRLLFLTDVPGVLDKQGKLLKELTVSEAEKLIKNGTISGGMIPKVETCVKALQNGVEGVVILNGKTPHSVLLELFTEQGVGTLIVS</sequence>
<organism>
    <name type="scientific">Bartonella tribocorum (strain CIP 105476 / IBS 506)</name>
    <dbReference type="NCBI Taxonomy" id="382640"/>
    <lineage>
        <taxon>Bacteria</taxon>
        <taxon>Pseudomonadati</taxon>
        <taxon>Pseudomonadota</taxon>
        <taxon>Alphaproteobacteria</taxon>
        <taxon>Hyphomicrobiales</taxon>
        <taxon>Bartonellaceae</taxon>
        <taxon>Bartonella</taxon>
    </lineage>
</organism>